<organism>
    <name type="scientific">Alkaliphilus metalliredigens (strain QYMF)</name>
    <dbReference type="NCBI Taxonomy" id="293826"/>
    <lineage>
        <taxon>Bacteria</taxon>
        <taxon>Bacillati</taxon>
        <taxon>Bacillota</taxon>
        <taxon>Clostridia</taxon>
        <taxon>Peptostreptococcales</taxon>
        <taxon>Natronincolaceae</taxon>
        <taxon>Alkaliphilus</taxon>
    </lineage>
</organism>
<accession>A6TWI0</accession>
<comment type="function">
    <text evidence="1">One of the early assembly proteins it binds 23S rRNA. One of the proteins that surrounds the polypeptide exit tunnel on the outside of the ribosome. Forms the main docking site for trigger factor binding to the ribosome.</text>
</comment>
<comment type="subunit">
    <text evidence="1">Part of the 50S ribosomal subunit. Contacts protein L29, and trigger factor when it is bound to the ribosome.</text>
</comment>
<comment type="similarity">
    <text evidence="1">Belongs to the universal ribosomal protein uL23 family.</text>
</comment>
<name>RL23_ALKMQ</name>
<sequence length="96" mass="11004">MTNPHDIIIKPVVTENSMMEMAEKKYTFVVAKKANKIEIKKAVEKIFDVKVEKVNTMNMIGKMKRMGKHIGRRSNWKKAVVTLTDGSKGIEFFEGM</sequence>
<dbReference type="EMBL" id="CP000724">
    <property type="protein sequence ID" value="ABR50548.1"/>
    <property type="molecule type" value="Genomic_DNA"/>
</dbReference>
<dbReference type="RefSeq" id="WP_012065439.1">
    <property type="nucleotide sequence ID" value="NC_009633.1"/>
</dbReference>
<dbReference type="SMR" id="A6TWI0"/>
<dbReference type="STRING" id="293826.Amet_4476"/>
<dbReference type="KEGG" id="amt:Amet_4476"/>
<dbReference type="eggNOG" id="COG0089">
    <property type="taxonomic scope" value="Bacteria"/>
</dbReference>
<dbReference type="HOGENOM" id="CLU_037562_3_2_9"/>
<dbReference type="OrthoDB" id="9793353at2"/>
<dbReference type="Proteomes" id="UP000001572">
    <property type="component" value="Chromosome"/>
</dbReference>
<dbReference type="GO" id="GO:1990904">
    <property type="term" value="C:ribonucleoprotein complex"/>
    <property type="evidence" value="ECO:0007669"/>
    <property type="project" value="UniProtKB-KW"/>
</dbReference>
<dbReference type="GO" id="GO:0005840">
    <property type="term" value="C:ribosome"/>
    <property type="evidence" value="ECO:0007669"/>
    <property type="project" value="UniProtKB-KW"/>
</dbReference>
<dbReference type="GO" id="GO:0019843">
    <property type="term" value="F:rRNA binding"/>
    <property type="evidence" value="ECO:0007669"/>
    <property type="project" value="UniProtKB-UniRule"/>
</dbReference>
<dbReference type="GO" id="GO:0003735">
    <property type="term" value="F:structural constituent of ribosome"/>
    <property type="evidence" value="ECO:0007669"/>
    <property type="project" value="InterPro"/>
</dbReference>
<dbReference type="GO" id="GO:0006412">
    <property type="term" value="P:translation"/>
    <property type="evidence" value="ECO:0007669"/>
    <property type="project" value="UniProtKB-UniRule"/>
</dbReference>
<dbReference type="FunFam" id="3.30.70.330:FF:000001">
    <property type="entry name" value="50S ribosomal protein L23"/>
    <property type="match status" value="1"/>
</dbReference>
<dbReference type="Gene3D" id="3.30.70.330">
    <property type="match status" value="1"/>
</dbReference>
<dbReference type="HAMAP" id="MF_01369_B">
    <property type="entry name" value="Ribosomal_uL23_B"/>
    <property type="match status" value="1"/>
</dbReference>
<dbReference type="InterPro" id="IPR012677">
    <property type="entry name" value="Nucleotide-bd_a/b_plait_sf"/>
</dbReference>
<dbReference type="InterPro" id="IPR013025">
    <property type="entry name" value="Ribosomal_uL23-like"/>
</dbReference>
<dbReference type="InterPro" id="IPR012678">
    <property type="entry name" value="Ribosomal_uL23/eL15/eS24_sf"/>
</dbReference>
<dbReference type="InterPro" id="IPR001014">
    <property type="entry name" value="Ribosomal_uL23_CS"/>
</dbReference>
<dbReference type="NCBIfam" id="NF004359">
    <property type="entry name" value="PRK05738.1-3"/>
    <property type="match status" value="1"/>
</dbReference>
<dbReference type="NCBIfam" id="NF004363">
    <property type="entry name" value="PRK05738.2-4"/>
    <property type="match status" value="1"/>
</dbReference>
<dbReference type="NCBIfam" id="NF004366">
    <property type="entry name" value="PRK05738.3-2"/>
    <property type="match status" value="1"/>
</dbReference>
<dbReference type="PANTHER" id="PTHR11620">
    <property type="entry name" value="60S RIBOSOMAL PROTEIN L23A"/>
    <property type="match status" value="1"/>
</dbReference>
<dbReference type="Pfam" id="PF00276">
    <property type="entry name" value="Ribosomal_L23"/>
    <property type="match status" value="1"/>
</dbReference>
<dbReference type="SUPFAM" id="SSF54189">
    <property type="entry name" value="Ribosomal proteins S24e, L23 and L15e"/>
    <property type="match status" value="1"/>
</dbReference>
<dbReference type="PROSITE" id="PS00050">
    <property type="entry name" value="RIBOSOMAL_L23"/>
    <property type="match status" value="1"/>
</dbReference>
<feature type="chain" id="PRO_1000068035" description="Large ribosomal subunit protein uL23">
    <location>
        <begin position="1"/>
        <end position="96"/>
    </location>
</feature>
<evidence type="ECO:0000255" key="1">
    <source>
        <dbReference type="HAMAP-Rule" id="MF_01369"/>
    </source>
</evidence>
<evidence type="ECO:0000305" key="2"/>
<gene>
    <name evidence="1" type="primary">rplW</name>
    <name type="ordered locus">Amet_4476</name>
</gene>
<proteinExistence type="inferred from homology"/>
<keyword id="KW-1185">Reference proteome</keyword>
<keyword id="KW-0687">Ribonucleoprotein</keyword>
<keyword id="KW-0689">Ribosomal protein</keyword>
<keyword id="KW-0694">RNA-binding</keyword>
<keyword id="KW-0699">rRNA-binding</keyword>
<protein>
    <recommendedName>
        <fullName evidence="1">Large ribosomal subunit protein uL23</fullName>
    </recommendedName>
    <alternativeName>
        <fullName evidence="2">50S ribosomal protein L23</fullName>
    </alternativeName>
</protein>
<reference key="1">
    <citation type="journal article" date="2016" name="Genome Announc.">
        <title>Complete genome sequence of Alkaliphilus metalliredigens strain QYMF, an alkaliphilic and metal-reducing bacterium isolated from borax-contaminated leachate ponds.</title>
        <authorList>
            <person name="Hwang C."/>
            <person name="Copeland A."/>
            <person name="Lucas S."/>
            <person name="Lapidus A."/>
            <person name="Barry K."/>
            <person name="Detter J.C."/>
            <person name="Glavina Del Rio T."/>
            <person name="Hammon N."/>
            <person name="Israni S."/>
            <person name="Dalin E."/>
            <person name="Tice H."/>
            <person name="Pitluck S."/>
            <person name="Chertkov O."/>
            <person name="Brettin T."/>
            <person name="Bruce D."/>
            <person name="Han C."/>
            <person name="Schmutz J."/>
            <person name="Larimer F."/>
            <person name="Land M.L."/>
            <person name="Hauser L."/>
            <person name="Kyrpides N."/>
            <person name="Mikhailova N."/>
            <person name="Ye Q."/>
            <person name="Zhou J."/>
            <person name="Richardson P."/>
            <person name="Fields M.W."/>
        </authorList>
    </citation>
    <scope>NUCLEOTIDE SEQUENCE [LARGE SCALE GENOMIC DNA]</scope>
    <source>
        <strain>QYMF</strain>
    </source>
</reference>